<protein>
    <recommendedName>
        <fullName evidence="1">ATP synthase subunit alpha</fullName>
        <ecNumber evidence="1">7.1.2.2</ecNumber>
    </recommendedName>
    <alternativeName>
        <fullName evidence="1">ATP synthase F1 sector subunit alpha</fullName>
    </alternativeName>
    <alternativeName>
        <fullName evidence="1">F-ATPase subunit alpha</fullName>
    </alternativeName>
</protein>
<evidence type="ECO:0000255" key="1">
    <source>
        <dbReference type="HAMAP-Rule" id="MF_01346"/>
    </source>
</evidence>
<keyword id="KW-0066">ATP synthesis</keyword>
<keyword id="KW-0067">ATP-binding</keyword>
<keyword id="KW-0997">Cell inner membrane</keyword>
<keyword id="KW-1003">Cell membrane</keyword>
<keyword id="KW-0139">CF(1)</keyword>
<keyword id="KW-0375">Hydrogen ion transport</keyword>
<keyword id="KW-0406">Ion transport</keyword>
<keyword id="KW-0472">Membrane</keyword>
<keyword id="KW-0547">Nucleotide-binding</keyword>
<keyword id="KW-1278">Translocase</keyword>
<keyword id="KW-0813">Transport</keyword>
<comment type="function">
    <text evidence="1">Produces ATP from ADP in the presence of a proton gradient across the membrane. The alpha chain is a regulatory subunit.</text>
</comment>
<comment type="catalytic activity">
    <reaction evidence="1">
        <text>ATP + H2O + 4 H(+)(in) = ADP + phosphate + 5 H(+)(out)</text>
        <dbReference type="Rhea" id="RHEA:57720"/>
        <dbReference type="ChEBI" id="CHEBI:15377"/>
        <dbReference type="ChEBI" id="CHEBI:15378"/>
        <dbReference type="ChEBI" id="CHEBI:30616"/>
        <dbReference type="ChEBI" id="CHEBI:43474"/>
        <dbReference type="ChEBI" id="CHEBI:456216"/>
        <dbReference type="EC" id="7.1.2.2"/>
    </reaction>
</comment>
<comment type="subunit">
    <text evidence="1">F-type ATPases have 2 components, CF(1) - the catalytic core - and CF(0) - the membrane proton channel. CF(1) has five subunits: alpha(3), beta(3), gamma(1), delta(1), epsilon(1). CF(0) has three main subunits: a(1), b(2) and c(9-12). The alpha and beta chains form an alternating ring which encloses part of the gamma chain. CF(1) is attached to CF(0) by a central stalk formed by the gamma and epsilon chains, while a peripheral stalk is formed by the delta and b chains.</text>
</comment>
<comment type="subcellular location">
    <subcellularLocation>
        <location evidence="1">Cell inner membrane</location>
        <topology evidence="1">Peripheral membrane protein</topology>
    </subcellularLocation>
</comment>
<comment type="similarity">
    <text evidence="1">Belongs to the ATPase alpha/beta chains family.</text>
</comment>
<dbReference type="EC" id="7.1.2.2" evidence="1"/>
<dbReference type="EMBL" id="CP000076">
    <property type="protein sequence ID" value="AAY95406.1"/>
    <property type="molecule type" value="Genomic_DNA"/>
</dbReference>
<dbReference type="RefSeq" id="WP_011064383.1">
    <property type="nucleotide sequence ID" value="NC_004129.6"/>
</dbReference>
<dbReference type="SMR" id="Q4K3A7"/>
<dbReference type="STRING" id="220664.PFL_6218"/>
<dbReference type="GeneID" id="57479178"/>
<dbReference type="KEGG" id="pfl:PFL_6218"/>
<dbReference type="PATRIC" id="fig|220664.5.peg.6348"/>
<dbReference type="eggNOG" id="COG0056">
    <property type="taxonomic scope" value="Bacteria"/>
</dbReference>
<dbReference type="HOGENOM" id="CLU_010091_2_1_6"/>
<dbReference type="Proteomes" id="UP000008540">
    <property type="component" value="Chromosome"/>
</dbReference>
<dbReference type="GO" id="GO:0005886">
    <property type="term" value="C:plasma membrane"/>
    <property type="evidence" value="ECO:0007669"/>
    <property type="project" value="UniProtKB-SubCell"/>
</dbReference>
<dbReference type="GO" id="GO:0045259">
    <property type="term" value="C:proton-transporting ATP synthase complex"/>
    <property type="evidence" value="ECO:0007669"/>
    <property type="project" value="UniProtKB-KW"/>
</dbReference>
<dbReference type="GO" id="GO:0043531">
    <property type="term" value="F:ADP binding"/>
    <property type="evidence" value="ECO:0007669"/>
    <property type="project" value="TreeGrafter"/>
</dbReference>
<dbReference type="GO" id="GO:0005524">
    <property type="term" value="F:ATP binding"/>
    <property type="evidence" value="ECO:0007669"/>
    <property type="project" value="UniProtKB-UniRule"/>
</dbReference>
<dbReference type="GO" id="GO:0046933">
    <property type="term" value="F:proton-transporting ATP synthase activity, rotational mechanism"/>
    <property type="evidence" value="ECO:0007669"/>
    <property type="project" value="UniProtKB-UniRule"/>
</dbReference>
<dbReference type="CDD" id="cd18113">
    <property type="entry name" value="ATP-synt_F1_alpha_C"/>
    <property type="match status" value="1"/>
</dbReference>
<dbReference type="CDD" id="cd18116">
    <property type="entry name" value="ATP-synt_F1_alpha_N"/>
    <property type="match status" value="1"/>
</dbReference>
<dbReference type="CDD" id="cd01132">
    <property type="entry name" value="F1-ATPase_alpha_CD"/>
    <property type="match status" value="1"/>
</dbReference>
<dbReference type="FunFam" id="1.20.150.20:FF:000001">
    <property type="entry name" value="ATP synthase subunit alpha"/>
    <property type="match status" value="1"/>
</dbReference>
<dbReference type="FunFam" id="2.40.30.20:FF:000001">
    <property type="entry name" value="ATP synthase subunit alpha"/>
    <property type="match status" value="1"/>
</dbReference>
<dbReference type="FunFam" id="3.40.50.300:FF:000002">
    <property type="entry name" value="ATP synthase subunit alpha"/>
    <property type="match status" value="1"/>
</dbReference>
<dbReference type="Gene3D" id="2.40.30.20">
    <property type="match status" value="1"/>
</dbReference>
<dbReference type="Gene3D" id="1.20.150.20">
    <property type="entry name" value="ATP synthase alpha/beta chain, C-terminal domain"/>
    <property type="match status" value="1"/>
</dbReference>
<dbReference type="Gene3D" id="3.40.50.300">
    <property type="entry name" value="P-loop containing nucleotide triphosphate hydrolases"/>
    <property type="match status" value="1"/>
</dbReference>
<dbReference type="HAMAP" id="MF_01346">
    <property type="entry name" value="ATP_synth_alpha_bact"/>
    <property type="match status" value="1"/>
</dbReference>
<dbReference type="InterPro" id="IPR023366">
    <property type="entry name" value="ATP_synth_asu-like_sf"/>
</dbReference>
<dbReference type="InterPro" id="IPR000793">
    <property type="entry name" value="ATP_synth_asu_C"/>
</dbReference>
<dbReference type="InterPro" id="IPR038376">
    <property type="entry name" value="ATP_synth_asu_C_sf"/>
</dbReference>
<dbReference type="InterPro" id="IPR033732">
    <property type="entry name" value="ATP_synth_F1_a_nt-bd_dom"/>
</dbReference>
<dbReference type="InterPro" id="IPR005294">
    <property type="entry name" value="ATP_synth_F1_asu"/>
</dbReference>
<dbReference type="InterPro" id="IPR020003">
    <property type="entry name" value="ATPase_a/bsu_AS"/>
</dbReference>
<dbReference type="InterPro" id="IPR004100">
    <property type="entry name" value="ATPase_F1/V1/A1_a/bsu_N"/>
</dbReference>
<dbReference type="InterPro" id="IPR036121">
    <property type="entry name" value="ATPase_F1/V1/A1_a/bsu_N_sf"/>
</dbReference>
<dbReference type="InterPro" id="IPR000194">
    <property type="entry name" value="ATPase_F1/V1/A1_a/bsu_nucl-bd"/>
</dbReference>
<dbReference type="InterPro" id="IPR027417">
    <property type="entry name" value="P-loop_NTPase"/>
</dbReference>
<dbReference type="NCBIfam" id="TIGR00962">
    <property type="entry name" value="atpA"/>
    <property type="match status" value="1"/>
</dbReference>
<dbReference type="NCBIfam" id="NF009884">
    <property type="entry name" value="PRK13343.1"/>
    <property type="match status" value="1"/>
</dbReference>
<dbReference type="PANTHER" id="PTHR48082">
    <property type="entry name" value="ATP SYNTHASE SUBUNIT ALPHA, MITOCHONDRIAL"/>
    <property type="match status" value="1"/>
</dbReference>
<dbReference type="PANTHER" id="PTHR48082:SF2">
    <property type="entry name" value="ATP SYNTHASE SUBUNIT ALPHA, MITOCHONDRIAL"/>
    <property type="match status" value="1"/>
</dbReference>
<dbReference type="Pfam" id="PF00006">
    <property type="entry name" value="ATP-synt_ab"/>
    <property type="match status" value="1"/>
</dbReference>
<dbReference type="Pfam" id="PF00306">
    <property type="entry name" value="ATP-synt_ab_C"/>
    <property type="match status" value="1"/>
</dbReference>
<dbReference type="Pfam" id="PF02874">
    <property type="entry name" value="ATP-synt_ab_N"/>
    <property type="match status" value="1"/>
</dbReference>
<dbReference type="PIRSF" id="PIRSF039088">
    <property type="entry name" value="F_ATPase_subunit_alpha"/>
    <property type="match status" value="1"/>
</dbReference>
<dbReference type="SUPFAM" id="SSF47917">
    <property type="entry name" value="C-terminal domain of alpha and beta subunits of F1 ATP synthase"/>
    <property type="match status" value="1"/>
</dbReference>
<dbReference type="SUPFAM" id="SSF50615">
    <property type="entry name" value="N-terminal domain of alpha and beta subunits of F1 ATP synthase"/>
    <property type="match status" value="1"/>
</dbReference>
<dbReference type="SUPFAM" id="SSF52540">
    <property type="entry name" value="P-loop containing nucleoside triphosphate hydrolases"/>
    <property type="match status" value="1"/>
</dbReference>
<dbReference type="PROSITE" id="PS00152">
    <property type="entry name" value="ATPASE_ALPHA_BETA"/>
    <property type="match status" value="1"/>
</dbReference>
<organism>
    <name type="scientific">Pseudomonas fluorescens (strain ATCC BAA-477 / NRRL B-23932 / Pf-5)</name>
    <dbReference type="NCBI Taxonomy" id="220664"/>
    <lineage>
        <taxon>Bacteria</taxon>
        <taxon>Pseudomonadati</taxon>
        <taxon>Pseudomonadota</taxon>
        <taxon>Gammaproteobacteria</taxon>
        <taxon>Pseudomonadales</taxon>
        <taxon>Pseudomonadaceae</taxon>
        <taxon>Pseudomonas</taxon>
    </lineage>
</organism>
<gene>
    <name evidence="1" type="primary">atpA</name>
    <name type="ordered locus">PFL_6218</name>
</gene>
<reference key="1">
    <citation type="journal article" date="2005" name="Nat. Biotechnol.">
        <title>Complete genome sequence of the plant commensal Pseudomonas fluorescens Pf-5.</title>
        <authorList>
            <person name="Paulsen I.T."/>
            <person name="Press C.M."/>
            <person name="Ravel J."/>
            <person name="Kobayashi D.Y."/>
            <person name="Myers G.S.A."/>
            <person name="Mavrodi D.V."/>
            <person name="DeBoy R.T."/>
            <person name="Seshadri R."/>
            <person name="Ren Q."/>
            <person name="Madupu R."/>
            <person name="Dodson R.J."/>
            <person name="Durkin A.S."/>
            <person name="Brinkac L.M."/>
            <person name="Daugherty S.C."/>
            <person name="Sullivan S.A."/>
            <person name="Rosovitz M.J."/>
            <person name="Gwinn M.L."/>
            <person name="Zhou L."/>
            <person name="Schneider D.J."/>
            <person name="Cartinhour S.W."/>
            <person name="Nelson W.C."/>
            <person name="Weidman J."/>
            <person name="Watkins K."/>
            <person name="Tran K."/>
            <person name="Khouri H."/>
            <person name="Pierson E.A."/>
            <person name="Pierson L.S. III"/>
            <person name="Thomashow L.S."/>
            <person name="Loper J.E."/>
        </authorList>
    </citation>
    <scope>NUCLEOTIDE SEQUENCE [LARGE SCALE GENOMIC DNA]</scope>
    <source>
        <strain>ATCC BAA-477 / NRRL B-23932 / Pf-5</strain>
    </source>
</reference>
<sequence>MQQLNPSEISEIIKGRIEKLDVTSQARNEGTVVSVSDGIVRIHGLADVMYGEMIEFPGGVYGMALNLEQDSVGAVVLGAYTSLAEGMSAKCTGRILEVPVGKELLGRVVDALGNPVDGKGPLNNTETDAVEKVAPGVIWRKSVDQPVQTGYKAVDAMIPVGRGQRELIIGDRQIGKTALAIDAIINQKDSGIFCVYVAIGQKQSTIANVVRKLEENGALANTIIVAASASESAALQFLAPYSGCTMGEYFRDRGEDALIVYDDLSKQAVAYRQISLLLRRPPGREAYPGDVFYLHSRLLERASRVSEEYVEKFTNGAVTGKTGSLTALPIIETQAGDVSAFVPTNVISITDGQIFLESAMFNSGIRPAVNAGVSVSRVGGAAQTKIIKKLSGGIRTALAQYRELAAFAQFASDLDEATRKQLEHGQRVTELMKQKQYAPMSIADMSLSLYAAERGFLTDVEIAKVGSFEQAMIAYFNRDHADLMAKINVKGDFNDEIDAGLKAGIEKFKATQTW</sequence>
<proteinExistence type="inferred from homology"/>
<name>ATPA_PSEF5</name>
<accession>Q4K3A7</accession>
<feature type="chain" id="PRO_0000238328" description="ATP synthase subunit alpha">
    <location>
        <begin position="1"/>
        <end position="514"/>
    </location>
</feature>
<feature type="binding site" evidence="1">
    <location>
        <begin position="170"/>
        <end position="177"/>
    </location>
    <ligand>
        <name>ATP</name>
        <dbReference type="ChEBI" id="CHEBI:30616"/>
    </ligand>
</feature>
<feature type="site" description="Required for activity" evidence="1">
    <location>
        <position position="374"/>
    </location>
</feature>